<proteinExistence type="inferred from homology"/>
<gene>
    <name evidence="1" type="primary">rpsD</name>
    <name type="ordered locus">RPE_1631</name>
</gene>
<dbReference type="EMBL" id="CP000463">
    <property type="protein sequence ID" value="ABJ05580.1"/>
    <property type="status" value="ALT_INIT"/>
    <property type="molecule type" value="Genomic_DNA"/>
</dbReference>
<dbReference type="SMR" id="Q07R54"/>
<dbReference type="STRING" id="316055.RPE_1631"/>
<dbReference type="KEGG" id="rpe:RPE_1631"/>
<dbReference type="eggNOG" id="COG0522">
    <property type="taxonomic scope" value="Bacteria"/>
</dbReference>
<dbReference type="HOGENOM" id="CLU_092403_0_0_5"/>
<dbReference type="OrthoDB" id="9803672at2"/>
<dbReference type="GO" id="GO:0015935">
    <property type="term" value="C:small ribosomal subunit"/>
    <property type="evidence" value="ECO:0007669"/>
    <property type="project" value="InterPro"/>
</dbReference>
<dbReference type="GO" id="GO:0019843">
    <property type="term" value="F:rRNA binding"/>
    <property type="evidence" value="ECO:0007669"/>
    <property type="project" value="UniProtKB-UniRule"/>
</dbReference>
<dbReference type="GO" id="GO:0003735">
    <property type="term" value="F:structural constituent of ribosome"/>
    <property type="evidence" value="ECO:0007669"/>
    <property type="project" value="InterPro"/>
</dbReference>
<dbReference type="GO" id="GO:0042274">
    <property type="term" value="P:ribosomal small subunit biogenesis"/>
    <property type="evidence" value="ECO:0007669"/>
    <property type="project" value="TreeGrafter"/>
</dbReference>
<dbReference type="GO" id="GO:0006412">
    <property type="term" value="P:translation"/>
    <property type="evidence" value="ECO:0007669"/>
    <property type="project" value="UniProtKB-UniRule"/>
</dbReference>
<dbReference type="CDD" id="cd00165">
    <property type="entry name" value="S4"/>
    <property type="match status" value="1"/>
</dbReference>
<dbReference type="FunFam" id="3.10.290.10:FF:000001">
    <property type="entry name" value="30S ribosomal protein S4"/>
    <property type="match status" value="1"/>
</dbReference>
<dbReference type="Gene3D" id="1.10.1050.10">
    <property type="entry name" value="Ribosomal Protein S4 Delta 41, Chain A, domain 1"/>
    <property type="match status" value="1"/>
</dbReference>
<dbReference type="Gene3D" id="3.10.290.10">
    <property type="entry name" value="RNA-binding S4 domain"/>
    <property type="match status" value="1"/>
</dbReference>
<dbReference type="HAMAP" id="MF_01306_B">
    <property type="entry name" value="Ribosomal_uS4_B"/>
    <property type="match status" value="1"/>
</dbReference>
<dbReference type="InterPro" id="IPR022801">
    <property type="entry name" value="Ribosomal_uS4"/>
</dbReference>
<dbReference type="InterPro" id="IPR005709">
    <property type="entry name" value="Ribosomal_uS4_bac-type"/>
</dbReference>
<dbReference type="InterPro" id="IPR018079">
    <property type="entry name" value="Ribosomal_uS4_CS"/>
</dbReference>
<dbReference type="InterPro" id="IPR001912">
    <property type="entry name" value="Ribosomal_uS4_N"/>
</dbReference>
<dbReference type="InterPro" id="IPR002942">
    <property type="entry name" value="S4_RNA-bd"/>
</dbReference>
<dbReference type="InterPro" id="IPR036986">
    <property type="entry name" value="S4_RNA-bd_sf"/>
</dbReference>
<dbReference type="NCBIfam" id="NF003717">
    <property type="entry name" value="PRK05327.1"/>
    <property type="match status" value="1"/>
</dbReference>
<dbReference type="NCBIfam" id="TIGR01017">
    <property type="entry name" value="rpsD_bact"/>
    <property type="match status" value="1"/>
</dbReference>
<dbReference type="PANTHER" id="PTHR11831">
    <property type="entry name" value="30S 40S RIBOSOMAL PROTEIN"/>
    <property type="match status" value="1"/>
</dbReference>
<dbReference type="PANTHER" id="PTHR11831:SF4">
    <property type="entry name" value="SMALL RIBOSOMAL SUBUNIT PROTEIN US4M"/>
    <property type="match status" value="1"/>
</dbReference>
<dbReference type="Pfam" id="PF00163">
    <property type="entry name" value="Ribosomal_S4"/>
    <property type="match status" value="1"/>
</dbReference>
<dbReference type="Pfam" id="PF01479">
    <property type="entry name" value="S4"/>
    <property type="match status" value="1"/>
</dbReference>
<dbReference type="SMART" id="SM01390">
    <property type="entry name" value="Ribosomal_S4"/>
    <property type="match status" value="1"/>
</dbReference>
<dbReference type="SMART" id="SM00363">
    <property type="entry name" value="S4"/>
    <property type="match status" value="1"/>
</dbReference>
<dbReference type="SUPFAM" id="SSF55174">
    <property type="entry name" value="Alpha-L RNA-binding motif"/>
    <property type="match status" value="1"/>
</dbReference>
<dbReference type="PROSITE" id="PS00632">
    <property type="entry name" value="RIBOSOMAL_S4"/>
    <property type="match status" value="1"/>
</dbReference>
<dbReference type="PROSITE" id="PS50889">
    <property type="entry name" value="S4"/>
    <property type="match status" value="1"/>
</dbReference>
<protein>
    <recommendedName>
        <fullName evidence="1">Small ribosomal subunit protein uS4</fullName>
    </recommendedName>
    <alternativeName>
        <fullName evidence="3">30S ribosomal protein S4</fullName>
    </alternativeName>
</protein>
<organism>
    <name type="scientific">Rhodopseudomonas palustris (strain BisA53)</name>
    <dbReference type="NCBI Taxonomy" id="316055"/>
    <lineage>
        <taxon>Bacteria</taxon>
        <taxon>Pseudomonadati</taxon>
        <taxon>Pseudomonadota</taxon>
        <taxon>Alphaproteobacteria</taxon>
        <taxon>Hyphomicrobiales</taxon>
        <taxon>Nitrobacteraceae</taxon>
        <taxon>Rhodopseudomonas</taxon>
    </lineage>
</organism>
<name>RS4_RHOP5</name>
<keyword id="KW-0687">Ribonucleoprotein</keyword>
<keyword id="KW-0689">Ribosomal protein</keyword>
<keyword id="KW-0694">RNA-binding</keyword>
<keyword id="KW-0699">rRNA-binding</keyword>
<evidence type="ECO:0000255" key="1">
    <source>
        <dbReference type="HAMAP-Rule" id="MF_01306"/>
    </source>
</evidence>
<evidence type="ECO:0000256" key="2">
    <source>
        <dbReference type="SAM" id="MobiDB-lite"/>
    </source>
</evidence>
<evidence type="ECO:0000305" key="3"/>
<sequence length="205" mass="23608">MTKRSEAKYKIDRRMGQNIWGRPKSPVNRREYGPGQHGQRRKGKLSDFGVQLRAKQKLKGYYANISERQFHAIYVEATRLKGDSGENLIGLLERRLDTVVYRAKFVATMFAARQFINHGHVKVNGKRVNISSYKVKVGDLIEVKESSKQLAFVLEASQLGERDTPDYVEVDHSKMTAKFIRVPHLSDVPFAVQMEPHLIVEFYSR</sequence>
<reference key="1">
    <citation type="submission" date="2006-09" db="EMBL/GenBank/DDBJ databases">
        <title>Complete sequence of Rhodopseudomonas palustris BisA53.</title>
        <authorList>
            <consortium name="US DOE Joint Genome Institute"/>
            <person name="Copeland A."/>
            <person name="Lucas S."/>
            <person name="Lapidus A."/>
            <person name="Barry K."/>
            <person name="Detter J.C."/>
            <person name="Glavina del Rio T."/>
            <person name="Hammon N."/>
            <person name="Israni S."/>
            <person name="Dalin E."/>
            <person name="Tice H."/>
            <person name="Pitluck S."/>
            <person name="Chain P."/>
            <person name="Malfatti S."/>
            <person name="Shin M."/>
            <person name="Vergez L."/>
            <person name="Schmutz J."/>
            <person name="Larimer F."/>
            <person name="Land M."/>
            <person name="Hauser L."/>
            <person name="Pelletier D.A."/>
            <person name="Kyrpides N."/>
            <person name="Kim E."/>
            <person name="Harwood C.S."/>
            <person name="Oda Y."/>
            <person name="Richardson P."/>
        </authorList>
    </citation>
    <scope>NUCLEOTIDE SEQUENCE [LARGE SCALE GENOMIC DNA]</scope>
    <source>
        <strain>BisA53</strain>
    </source>
</reference>
<feature type="chain" id="PRO_0000293459" description="Small ribosomal subunit protein uS4">
    <location>
        <begin position="1"/>
        <end position="205"/>
    </location>
</feature>
<feature type="domain" description="S4 RNA-binding" evidence="1">
    <location>
        <begin position="94"/>
        <end position="157"/>
    </location>
</feature>
<feature type="region of interest" description="Disordered" evidence="2">
    <location>
        <begin position="18"/>
        <end position="45"/>
    </location>
</feature>
<comment type="function">
    <text evidence="1">One of the primary rRNA binding proteins, it binds directly to 16S rRNA where it nucleates assembly of the body of the 30S subunit.</text>
</comment>
<comment type="function">
    <text evidence="1">With S5 and S12 plays an important role in translational accuracy.</text>
</comment>
<comment type="subunit">
    <text evidence="1">Part of the 30S ribosomal subunit. Contacts protein S5. The interaction surface between S4 and S5 is involved in control of translational fidelity.</text>
</comment>
<comment type="similarity">
    <text evidence="1">Belongs to the universal ribosomal protein uS4 family.</text>
</comment>
<comment type="sequence caution" evidence="3">
    <conflict type="erroneous initiation">
        <sequence resource="EMBL-CDS" id="ABJ05580"/>
    </conflict>
</comment>
<accession>Q07R54</accession>